<proteinExistence type="inferred from homology"/>
<gene>
    <name evidence="1" type="primary">trmA</name>
    <name type="ordered locus">HS_0306</name>
</gene>
<accession>Q0I1I7</accession>
<comment type="function">
    <text evidence="1">Dual-specificity methyltransferase that catalyzes the formation of 5-methyluridine at position 54 (m5U54) in all tRNAs, and that of position 341 (m5U341) in tmRNA (transfer-mRNA).</text>
</comment>
<comment type="catalytic activity">
    <reaction evidence="1">
        <text>uridine(54) in tRNA + S-adenosyl-L-methionine = 5-methyluridine(54) in tRNA + S-adenosyl-L-homocysteine + H(+)</text>
        <dbReference type="Rhea" id="RHEA:42712"/>
        <dbReference type="Rhea" id="RHEA-COMP:10167"/>
        <dbReference type="Rhea" id="RHEA-COMP:10193"/>
        <dbReference type="ChEBI" id="CHEBI:15378"/>
        <dbReference type="ChEBI" id="CHEBI:57856"/>
        <dbReference type="ChEBI" id="CHEBI:59789"/>
        <dbReference type="ChEBI" id="CHEBI:65315"/>
        <dbReference type="ChEBI" id="CHEBI:74447"/>
        <dbReference type="EC" id="2.1.1.35"/>
    </reaction>
</comment>
<comment type="catalytic activity">
    <reaction evidence="1">
        <text>uridine(341) in tmRNA + S-adenosyl-L-methionine = 5-methyluridine(341) in tmRNA + S-adenosyl-L-homocysteine + H(+)</text>
        <dbReference type="Rhea" id="RHEA:43612"/>
        <dbReference type="Rhea" id="RHEA-COMP:10630"/>
        <dbReference type="Rhea" id="RHEA-COMP:10631"/>
        <dbReference type="ChEBI" id="CHEBI:15378"/>
        <dbReference type="ChEBI" id="CHEBI:57856"/>
        <dbReference type="ChEBI" id="CHEBI:59789"/>
        <dbReference type="ChEBI" id="CHEBI:65315"/>
        <dbReference type="ChEBI" id="CHEBI:74447"/>
    </reaction>
</comment>
<comment type="similarity">
    <text evidence="1">Belongs to the class I-like SAM-binding methyltransferase superfamily. RNA M5U methyltransferase family. TrmA subfamily.</text>
</comment>
<comment type="sequence caution" evidence="2">
    <conflict type="erroneous initiation">
        <sequence resource="EMBL-CDS" id="ABI24584"/>
    </conflict>
    <text>Extended N-terminus.</text>
</comment>
<protein>
    <recommendedName>
        <fullName evidence="1">tRNA/tmRNA (uracil-C(5))-methyltransferase</fullName>
        <ecNumber evidence="1">2.1.1.-</ecNumber>
        <ecNumber evidence="1">2.1.1.35</ecNumber>
    </recommendedName>
    <alternativeName>
        <fullName evidence="1">tRNA (uracil(54)-C(5))-methyltransferase</fullName>
    </alternativeName>
    <alternativeName>
        <fullName evidence="1">tRNA(m5U54)-methyltransferase</fullName>
        <shortName evidence="1">RUMT</shortName>
    </alternativeName>
    <alternativeName>
        <fullName evidence="1">tmRNA (uracil(341)-C(5))-methyltransferase</fullName>
    </alternativeName>
</protein>
<dbReference type="EC" id="2.1.1.-" evidence="1"/>
<dbReference type="EC" id="2.1.1.35" evidence="1"/>
<dbReference type="EMBL" id="CP000436">
    <property type="protein sequence ID" value="ABI24584.1"/>
    <property type="status" value="ALT_INIT"/>
    <property type="molecule type" value="Genomic_DNA"/>
</dbReference>
<dbReference type="SMR" id="Q0I1I7"/>
<dbReference type="KEGG" id="hso:HS_0306"/>
<dbReference type="eggNOG" id="COG2265">
    <property type="taxonomic scope" value="Bacteria"/>
</dbReference>
<dbReference type="HOGENOM" id="CLU_043022_0_0_6"/>
<dbReference type="GO" id="GO:0005829">
    <property type="term" value="C:cytosol"/>
    <property type="evidence" value="ECO:0007669"/>
    <property type="project" value="TreeGrafter"/>
</dbReference>
<dbReference type="GO" id="GO:0019843">
    <property type="term" value="F:rRNA binding"/>
    <property type="evidence" value="ECO:0007669"/>
    <property type="project" value="TreeGrafter"/>
</dbReference>
<dbReference type="GO" id="GO:0030697">
    <property type="term" value="F:tRNA (uracil(54)-C5)-methyltransferase activity, S-adenosyl methionine-dependent"/>
    <property type="evidence" value="ECO:0007669"/>
    <property type="project" value="UniProtKB-UniRule"/>
</dbReference>
<dbReference type="GO" id="GO:0000049">
    <property type="term" value="F:tRNA binding"/>
    <property type="evidence" value="ECO:0007669"/>
    <property type="project" value="TreeGrafter"/>
</dbReference>
<dbReference type="GO" id="GO:0030488">
    <property type="term" value="P:tRNA methylation"/>
    <property type="evidence" value="ECO:0007669"/>
    <property type="project" value="UniProtKB-UniRule"/>
</dbReference>
<dbReference type="CDD" id="cd02440">
    <property type="entry name" value="AdoMet_MTases"/>
    <property type="match status" value="1"/>
</dbReference>
<dbReference type="FunFam" id="2.40.50.1070:FF:000001">
    <property type="entry name" value="tRNA/tmRNA (uracil-C(5))-methyltransferase"/>
    <property type="match status" value="1"/>
</dbReference>
<dbReference type="FunFam" id="3.40.50.150:FF:000012">
    <property type="entry name" value="tRNA/tmRNA (uracil-C(5))-methyltransferase"/>
    <property type="match status" value="1"/>
</dbReference>
<dbReference type="Gene3D" id="2.40.50.1070">
    <property type="match status" value="1"/>
</dbReference>
<dbReference type="Gene3D" id="3.40.50.150">
    <property type="entry name" value="Vaccinia Virus protein VP39"/>
    <property type="match status" value="1"/>
</dbReference>
<dbReference type="HAMAP" id="MF_01011">
    <property type="entry name" value="RNA_methyltr_TrmA"/>
    <property type="match status" value="1"/>
</dbReference>
<dbReference type="InterPro" id="IPR030390">
    <property type="entry name" value="MeTrfase_TrmA_AS"/>
</dbReference>
<dbReference type="InterPro" id="IPR030391">
    <property type="entry name" value="MeTrfase_TrmA_CS"/>
</dbReference>
<dbReference type="InterPro" id="IPR029063">
    <property type="entry name" value="SAM-dependent_MTases_sf"/>
</dbReference>
<dbReference type="InterPro" id="IPR011869">
    <property type="entry name" value="TrmA_MeTrfase"/>
</dbReference>
<dbReference type="InterPro" id="IPR010280">
    <property type="entry name" value="U5_MeTrfase_fam"/>
</dbReference>
<dbReference type="NCBIfam" id="TIGR02143">
    <property type="entry name" value="trmA_only"/>
    <property type="match status" value="1"/>
</dbReference>
<dbReference type="PANTHER" id="PTHR47790">
    <property type="entry name" value="TRNA/TMRNA (URACIL-C(5))-METHYLTRANSFERASE"/>
    <property type="match status" value="1"/>
</dbReference>
<dbReference type="PANTHER" id="PTHR47790:SF2">
    <property type="entry name" value="TRNA_TMRNA (URACIL-C(5))-METHYLTRANSFERASE"/>
    <property type="match status" value="1"/>
</dbReference>
<dbReference type="Pfam" id="PF05958">
    <property type="entry name" value="tRNA_U5-meth_tr"/>
    <property type="match status" value="1"/>
</dbReference>
<dbReference type="SUPFAM" id="SSF53335">
    <property type="entry name" value="S-adenosyl-L-methionine-dependent methyltransferases"/>
    <property type="match status" value="1"/>
</dbReference>
<dbReference type="PROSITE" id="PS51687">
    <property type="entry name" value="SAM_MT_RNA_M5U"/>
    <property type="match status" value="1"/>
</dbReference>
<dbReference type="PROSITE" id="PS01230">
    <property type="entry name" value="TRMA_1"/>
    <property type="match status" value="1"/>
</dbReference>
<dbReference type="PROSITE" id="PS01231">
    <property type="entry name" value="TRMA_2"/>
    <property type="match status" value="1"/>
</dbReference>
<feature type="chain" id="PRO_0000281445" description="tRNA/tmRNA (uracil-C(5))-methyltransferase">
    <location>
        <begin position="1"/>
        <end position="366"/>
    </location>
</feature>
<feature type="active site" description="Nucleophile" evidence="1">
    <location>
        <position position="322"/>
    </location>
</feature>
<feature type="active site" description="Proton acceptor" evidence="1">
    <location>
        <position position="356"/>
    </location>
</feature>
<feature type="binding site" evidence="1">
    <location>
        <position position="188"/>
    </location>
    <ligand>
        <name>S-adenosyl-L-methionine</name>
        <dbReference type="ChEBI" id="CHEBI:59789"/>
    </ligand>
</feature>
<feature type="binding site" evidence="1">
    <location>
        <position position="216"/>
    </location>
    <ligand>
        <name>S-adenosyl-L-methionine</name>
        <dbReference type="ChEBI" id="CHEBI:59789"/>
    </ligand>
</feature>
<feature type="binding site" evidence="1">
    <location>
        <position position="221"/>
    </location>
    <ligand>
        <name>S-adenosyl-L-methionine</name>
        <dbReference type="ChEBI" id="CHEBI:59789"/>
    </ligand>
</feature>
<feature type="binding site" evidence="1">
    <location>
        <position position="237"/>
    </location>
    <ligand>
        <name>S-adenosyl-L-methionine</name>
        <dbReference type="ChEBI" id="CHEBI:59789"/>
    </ligand>
</feature>
<feature type="binding site" evidence="1">
    <location>
        <position position="297"/>
    </location>
    <ligand>
        <name>S-adenosyl-L-methionine</name>
        <dbReference type="ChEBI" id="CHEBI:59789"/>
    </ligand>
</feature>
<organism>
    <name type="scientific">Histophilus somni (strain 129Pt)</name>
    <name type="common">Haemophilus somnus</name>
    <dbReference type="NCBI Taxonomy" id="205914"/>
    <lineage>
        <taxon>Bacteria</taxon>
        <taxon>Pseudomonadati</taxon>
        <taxon>Pseudomonadota</taxon>
        <taxon>Gammaproteobacteria</taxon>
        <taxon>Pasteurellales</taxon>
        <taxon>Pasteurellaceae</taxon>
        <taxon>Histophilus</taxon>
    </lineage>
</organism>
<reference key="1">
    <citation type="journal article" date="2007" name="J. Bacteriol.">
        <title>Complete genome sequence of Haemophilus somnus (Histophilus somni) strain 129Pt and comparison to Haemophilus ducreyi 35000HP and Haemophilus influenzae Rd.</title>
        <authorList>
            <person name="Challacombe J.F."/>
            <person name="Duncan A.J."/>
            <person name="Brettin T.S."/>
            <person name="Bruce D."/>
            <person name="Chertkov O."/>
            <person name="Detter J.C."/>
            <person name="Han C.S."/>
            <person name="Misra M."/>
            <person name="Richardson P."/>
            <person name="Tapia R."/>
            <person name="Thayer N."/>
            <person name="Xie G."/>
            <person name="Inzana T.J."/>
        </authorList>
    </citation>
    <scope>NUCLEOTIDE SEQUENCE [LARGE SCALE GENOMIC DNA]</scope>
    <source>
        <strain>129Pt</strain>
    </source>
</reference>
<evidence type="ECO:0000255" key="1">
    <source>
        <dbReference type="HAMAP-Rule" id="MF_01011"/>
    </source>
</evidence>
<evidence type="ECO:0000305" key="2"/>
<sequence length="366" mass="42545">MQRLPIEQYSALLAEKQQKLTELLAPFNSPPLDVFASETSHFRMRAEFRIWHEQDDFYHIMFDQKTKQRFRIDQFPIASQLINQMMLALLPLLKQHNILTHRLFQIDYLSTLSNKIIVSLLYHKTLNEEWLQAATQLKQQLIKQGFDVQIIGRANKQKICLQQDFVDEILPVKNQQYIYRQVENSFTQPNATVNCKMLEWAIDCTKNSQGDLLELYCGNGNFSIALAQNFRKVLATEIAKPSVSAAQFNIAANKIDNLHIIRMSAEDFTQAMNGVRAFNRLKGINLQDYQCNTIFVDPPRAGLDMATVKLVQNYERILYISCNPYTLCENLQELTKTHRIEKAALFDQFPYTEHMESGVWLIKKSN</sequence>
<keyword id="KW-0489">Methyltransferase</keyword>
<keyword id="KW-0949">S-adenosyl-L-methionine</keyword>
<keyword id="KW-0808">Transferase</keyword>
<keyword id="KW-0819">tRNA processing</keyword>
<name>TRMA_HISS1</name>